<evidence type="ECO:0000269" key="1">
    <source>
    </source>
</evidence>
<proteinExistence type="evidence at protein level"/>
<reference key="1">
    <citation type="journal article" date="2004" name="Genome Res.">
        <title>The status, quality, and expansion of the NIH full-length cDNA project: the Mammalian Gene Collection (MGC).</title>
        <authorList>
            <consortium name="The MGC Project Team"/>
        </authorList>
    </citation>
    <scope>NUCLEOTIDE SEQUENCE [LARGE SCALE MRNA]</scope>
    <scope>VARIANT TYR-36</scope>
    <source>
        <tissue>Testis</tissue>
    </source>
</reference>
<keyword id="KW-1267">Proteomics identification</keyword>
<keyword id="KW-1185">Reference proteome</keyword>
<accession>Q96KX1</accession>
<dbReference type="EMBL" id="BC016746">
    <property type="protein sequence ID" value="AAH16746.1"/>
    <property type="molecule type" value="mRNA"/>
</dbReference>
<dbReference type="CCDS" id="CCDS3615.1"/>
<dbReference type="RefSeq" id="NP_001356817.1">
    <property type="nucleotide sequence ID" value="NM_001369888.1"/>
</dbReference>
<dbReference type="RefSeq" id="NP_001356818.1">
    <property type="nucleotide sequence ID" value="NM_001369889.1"/>
</dbReference>
<dbReference type="RefSeq" id="NP_001401564.1">
    <property type="nucleotide sequence ID" value="NM_001414635.1"/>
</dbReference>
<dbReference type="RefSeq" id="NP_001401565.1">
    <property type="nucleotide sequence ID" value="NM_001414636.1"/>
</dbReference>
<dbReference type="RefSeq" id="NP_001401567.1">
    <property type="nucleotide sequence ID" value="NM_001414638.1"/>
</dbReference>
<dbReference type="RefSeq" id="NP_001401568.1">
    <property type="nucleotide sequence ID" value="NM_001414639.1"/>
</dbReference>
<dbReference type="RefSeq" id="NP_001401569.1">
    <property type="nucleotide sequence ID" value="NM_001414640.1"/>
</dbReference>
<dbReference type="RefSeq" id="NP_001401570.1">
    <property type="nucleotide sequence ID" value="NM_001414641.1"/>
</dbReference>
<dbReference type="RefSeq" id="NP_001401571.1">
    <property type="nucleotide sequence ID" value="NM_001414642.1"/>
</dbReference>
<dbReference type="RefSeq" id="NP_653246.2">
    <property type="nucleotide sequence ID" value="NM_144645.4"/>
</dbReference>
<dbReference type="RefSeq" id="XP_011529912.1">
    <property type="nucleotide sequence ID" value="XM_011531610.2"/>
</dbReference>
<dbReference type="RefSeq" id="XP_011529913.1">
    <property type="nucleotide sequence ID" value="XM_011531611.2"/>
</dbReference>
<dbReference type="RefSeq" id="XP_011529914.1">
    <property type="nucleotide sequence ID" value="XM_011531612.2"/>
</dbReference>
<dbReference type="RefSeq" id="XP_011529915.1">
    <property type="nucleotide sequence ID" value="XM_011531613.2"/>
</dbReference>
<dbReference type="RefSeq" id="XP_011529917.1">
    <property type="nucleotide sequence ID" value="XM_011531615.2"/>
</dbReference>
<dbReference type="RefSeq" id="XP_016863235.1">
    <property type="nucleotide sequence ID" value="XM_017007746.1"/>
</dbReference>
<dbReference type="BioGRID" id="126345">
    <property type="interactions" value="3"/>
</dbReference>
<dbReference type="FunCoup" id="Q96KX1">
    <property type="interactions" value="1"/>
</dbReference>
<dbReference type="STRING" id="9606.ENSP00000295898"/>
<dbReference type="GlyGen" id="Q96KX1">
    <property type="glycosylation" value="1 site, 1 O-linked glycan (1 site)"/>
</dbReference>
<dbReference type="iPTMnet" id="Q96KX1"/>
<dbReference type="PhosphoSitePlus" id="Q96KX1"/>
<dbReference type="BioMuta" id="C4orf36"/>
<dbReference type="DMDM" id="119368246"/>
<dbReference type="jPOST" id="Q96KX1"/>
<dbReference type="PaxDb" id="9606-ENSP00000420949"/>
<dbReference type="PeptideAtlas" id="Q96KX1"/>
<dbReference type="ProteomicsDB" id="77128"/>
<dbReference type="Antibodypedia" id="58439">
    <property type="antibodies" value="69 antibodies from 7 providers"/>
</dbReference>
<dbReference type="DNASU" id="132989"/>
<dbReference type="Ensembl" id="ENST00000295898.8">
    <property type="protein sequence ID" value="ENSP00000295898.3"/>
    <property type="gene ID" value="ENSG00000163633.12"/>
</dbReference>
<dbReference type="GeneID" id="132989"/>
<dbReference type="KEGG" id="hsa:132989"/>
<dbReference type="MANE-Select" id="ENST00000295898.8">
    <property type="protein sequence ID" value="ENSP00000295898.3"/>
    <property type="RefSeq nucleotide sequence ID" value="NM_144645.4"/>
    <property type="RefSeq protein sequence ID" value="NP_653246.2"/>
</dbReference>
<dbReference type="UCSC" id="uc003hqe.5">
    <property type="organism name" value="human"/>
</dbReference>
<dbReference type="AGR" id="HGNC:28386"/>
<dbReference type="CTD" id="132989"/>
<dbReference type="DisGeNET" id="132989"/>
<dbReference type="GeneCards" id="C4orf36"/>
<dbReference type="HGNC" id="HGNC:28386">
    <property type="gene designation" value="C4orf36"/>
</dbReference>
<dbReference type="HPA" id="ENSG00000163633">
    <property type="expression patterns" value="Tissue enriched (testis)"/>
</dbReference>
<dbReference type="neXtProt" id="NX_Q96KX1"/>
<dbReference type="OpenTargets" id="ENSG00000163633"/>
<dbReference type="PharmGKB" id="PA162379784"/>
<dbReference type="VEuPathDB" id="HostDB:ENSG00000163633"/>
<dbReference type="eggNOG" id="ENOG502SVGH">
    <property type="taxonomic scope" value="Eukaryota"/>
</dbReference>
<dbReference type="GeneTree" id="ENSGT00390000015549"/>
<dbReference type="HOGENOM" id="CLU_140433_0_0_1"/>
<dbReference type="InParanoid" id="Q96KX1"/>
<dbReference type="OMA" id="YEVQEPW"/>
<dbReference type="OrthoDB" id="9821984at2759"/>
<dbReference type="PAN-GO" id="Q96KX1">
    <property type="GO annotations" value="0 GO annotations based on evolutionary models"/>
</dbReference>
<dbReference type="PhylomeDB" id="Q96KX1"/>
<dbReference type="TreeFam" id="TF336886"/>
<dbReference type="PathwayCommons" id="Q96KX1"/>
<dbReference type="SignaLink" id="Q96KX1"/>
<dbReference type="BioGRID-ORCS" id="132989">
    <property type="hits" value="8 hits in 1108 CRISPR screens"/>
</dbReference>
<dbReference type="ChiTaRS" id="C4orf36">
    <property type="organism name" value="human"/>
</dbReference>
<dbReference type="GenomeRNAi" id="132989"/>
<dbReference type="Pharos" id="Q96KX1">
    <property type="development level" value="Tdark"/>
</dbReference>
<dbReference type="PRO" id="PR:Q96KX1"/>
<dbReference type="Proteomes" id="UP000005640">
    <property type="component" value="Chromosome 4"/>
</dbReference>
<dbReference type="RNAct" id="Q96KX1">
    <property type="molecule type" value="protein"/>
</dbReference>
<dbReference type="Bgee" id="ENSG00000163633">
    <property type="expression patterns" value="Expressed in male germ line stem cell (sensu Vertebrata) in testis and 98 other cell types or tissues"/>
</dbReference>
<dbReference type="ExpressionAtlas" id="Q96KX1">
    <property type="expression patterns" value="baseline and differential"/>
</dbReference>
<dbReference type="InterPro" id="IPR027825">
    <property type="entry name" value="DUF4522"/>
</dbReference>
<dbReference type="PANTHER" id="PTHR38002">
    <property type="entry name" value="C4ORF36 ISOFORM 11"/>
    <property type="match status" value="1"/>
</dbReference>
<dbReference type="PANTHER" id="PTHR38002:SF1">
    <property type="entry name" value="CHROMOSOME 4 OPEN READING FRAME 36"/>
    <property type="match status" value="1"/>
</dbReference>
<dbReference type="Pfam" id="PF15022">
    <property type="entry name" value="DUF4522"/>
    <property type="match status" value="1"/>
</dbReference>
<gene>
    <name type="primary">C4orf36</name>
</gene>
<protein>
    <recommendedName>
        <fullName>Uncharacterized protein C4orf36</fullName>
    </recommendedName>
</protein>
<sequence>MAYGVPRKNTVKTILRGSCYNVQEPWDIALLAKTWSTNLANIKLPFLEEISFGGSVQLTKCTTIKDGLLPSAESIKLEREYEVKRLCKLKCQENTSKEIQLLLRERPAGLRRPLPSK</sequence>
<name>CD036_HUMAN</name>
<organism>
    <name type="scientific">Homo sapiens</name>
    <name type="common">Human</name>
    <dbReference type="NCBI Taxonomy" id="9606"/>
    <lineage>
        <taxon>Eukaryota</taxon>
        <taxon>Metazoa</taxon>
        <taxon>Chordata</taxon>
        <taxon>Craniata</taxon>
        <taxon>Vertebrata</taxon>
        <taxon>Euteleostomi</taxon>
        <taxon>Mammalia</taxon>
        <taxon>Eutheria</taxon>
        <taxon>Euarchontoglires</taxon>
        <taxon>Primates</taxon>
        <taxon>Haplorrhini</taxon>
        <taxon>Catarrhini</taxon>
        <taxon>Hominidae</taxon>
        <taxon>Homo</taxon>
    </lineage>
</organism>
<feature type="chain" id="PRO_0000268820" description="Uncharacterized protein C4orf36">
    <location>
        <begin position="1"/>
        <end position="117"/>
    </location>
</feature>
<feature type="sequence variant" id="VAR_056784" description="In dbSNP:rs11938345.">
    <original>S</original>
    <variation>N</variation>
    <location>
        <position position="18"/>
    </location>
</feature>
<feature type="sequence variant" id="VAR_029755" description="In dbSNP:rs1550931." evidence="1">
    <original>S</original>
    <variation>Y</variation>
    <location>
        <position position="36"/>
    </location>
</feature>